<gene>
    <name evidence="1" type="primary">pyrG</name>
    <name type="ordered locus">Bd0808</name>
</gene>
<keyword id="KW-0067">ATP-binding</keyword>
<keyword id="KW-0315">Glutamine amidotransferase</keyword>
<keyword id="KW-0436">Ligase</keyword>
<keyword id="KW-0460">Magnesium</keyword>
<keyword id="KW-0479">Metal-binding</keyword>
<keyword id="KW-0547">Nucleotide-binding</keyword>
<keyword id="KW-0665">Pyrimidine biosynthesis</keyword>
<keyword id="KW-1185">Reference proteome</keyword>
<proteinExistence type="inferred from homology"/>
<dbReference type="EC" id="6.3.4.2" evidence="1"/>
<dbReference type="EMBL" id="BX842648">
    <property type="protein sequence ID" value="CAE78757.1"/>
    <property type="status" value="ALT_INIT"/>
    <property type="molecule type" value="Genomic_DNA"/>
</dbReference>
<dbReference type="SMR" id="Q6MPP0"/>
<dbReference type="STRING" id="264462.Bd0808"/>
<dbReference type="MEROPS" id="C26.964"/>
<dbReference type="KEGG" id="bba:Bd0808"/>
<dbReference type="eggNOG" id="COG0504">
    <property type="taxonomic scope" value="Bacteria"/>
</dbReference>
<dbReference type="HOGENOM" id="CLU_011675_5_0_7"/>
<dbReference type="UniPathway" id="UPA00159">
    <property type="reaction ID" value="UER00277"/>
</dbReference>
<dbReference type="Proteomes" id="UP000008080">
    <property type="component" value="Chromosome"/>
</dbReference>
<dbReference type="GO" id="GO:0005829">
    <property type="term" value="C:cytosol"/>
    <property type="evidence" value="ECO:0007669"/>
    <property type="project" value="TreeGrafter"/>
</dbReference>
<dbReference type="GO" id="GO:0005524">
    <property type="term" value="F:ATP binding"/>
    <property type="evidence" value="ECO:0007669"/>
    <property type="project" value="UniProtKB-KW"/>
</dbReference>
<dbReference type="GO" id="GO:0003883">
    <property type="term" value="F:CTP synthase activity"/>
    <property type="evidence" value="ECO:0007669"/>
    <property type="project" value="UniProtKB-UniRule"/>
</dbReference>
<dbReference type="GO" id="GO:0004359">
    <property type="term" value="F:glutaminase activity"/>
    <property type="evidence" value="ECO:0007669"/>
    <property type="project" value="RHEA"/>
</dbReference>
<dbReference type="GO" id="GO:0042802">
    <property type="term" value="F:identical protein binding"/>
    <property type="evidence" value="ECO:0007669"/>
    <property type="project" value="TreeGrafter"/>
</dbReference>
<dbReference type="GO" id="GO:0046872">
    <property type="term" value="F:metal ion binding"/>
    <property type="evidence" value="ECO:0007669"/>
    <property type="project" value="UniProtKB-KW"/>
</dbReference>
<dbReference type="GO" id="GO:0044210">
    <property type="term" value="P:'de novo' CTP biosynthetic process"/>
    <property type="evidence" value="ECO:0007669"/>
    <property type="project" value="UniProtKB-UniRule"/>
</dbReference>
<dbReference type="GO" id="GO:0019856">
    <property type="term" value="P:pyrimidine nucleobase biosynthetic process"/>
    <property type="evidence" value="ECO:0007669"/>
    <property type="project" value="TreeGrafter"/>
</dbReference>
<dbReference type="CDD" id="cd03113">
    <property type="entry name" value="CTPS_N"/>
    <property type="match status" value="1"/>
</dbReference>
<dbReference type="CDD" id="cd01746">
    <property type="entry name" value="GATase1_CTP_Synthase"/>
    <property type="match status" value="1"/>
</dbReference>
<dbReference type="FunFam" id="3.40.50.300:FF:000009">
    <property type="entry name" value="CTP synthase"/>
    <property type="match status" value="1"/>
</dbReference>
<dbReference type="FunFam" id="3.40.50.880:FF:000002">
    <property type="entry name" value="CTP synthase"/>
    <property type="match status" value="1"/>
</dbReference>
<dbReference type="Gene3D" id="3.40.50.880">
    <property type="match status" value="1"/>
</dbReference>
<dbReference type="Gene3D" id="3.40.50.300">
    <property type="entry name" value="P-loop containing nucleotide triphosphate hydrolases"/>
    <property type="match status" value="1"/>
</dbReference>
<dbReference type="HAMAP" id="MF_01227">
    <property type="entry name" value="PyrG"/>
    <property type="match status" value="1"/>
</dbReference>
<dbReference type="InterPro" id="IPR029062">
    <property type="entry name" value="Class_I_gatase-like"/>
</dbReference>
<dbReference type="InterPro" id="IPR004468">
    <property type="entry name" value="CTP_synthase"/>
</dbReference>
<dbReference type="InterPro" id="IPR017456">
    <property type="entry name" value="CTP_synthase_N"/>
</dbReference>
<dbReference type="InterPro" id="IPR017926">
    <property type="entry name" value="GATASE"/>
</dbReference>
<dbReference type="InterPro" id="IPR033828">
    <property type="entry name" value="GATase1_CTP_Synthase"/>
</dbReference>
<dbReference type="InterPro" id="IPR027417">
    <property type="entry name" value="P-loop_NTPase"/>
</dbReference>
<dbReference type="NCBIfam" id="NF003792">
    <property type="entry name" value="PRK05380.1"/>
    <property type="match status" value="1"/>
</dbReference>
<dbReference type="NCBIfam" id="TIGR00337">
    <property type="entry name" value="PyrG"/>
    <property type="match status" value="1"/>
</dbReference>
<dbReference type="PANTHER" id="PTHR11550">
    <property type="entry name" value="CTP SYNTHASE"/>
    <property type="match status" value="1"/>
</dbReference>
<dbReference type="PANTHER" id="PTHR11550:SF0">
    <property type="entry name" value="CTP SYNTHASE-RELATED"/>
    <property type="match status" value="1"/>
</dbReference>
<dbReference type="Pfam" id="PF06418">
    <property type="entry name" value="CTP_synth_N"/>
    <property type="match status" value="1"/>
</dbReference>
<dbReference type="Pfam" id="PF00117">
    <property type="entry name" value="GATase"/>
    <property type="match status" value="1"/>
</dbReference>
<dbReference type="SUPFAM" id="SSF52317">
    <property type="entry name" value="Class I glutamine amidotransferase-like"/>
    <property type="match status" value="1"/>
</dbReference>
<dbReference type="SUPFAM" id="SSF52540">
    <property type="entry name" value="P-loop containing nucleoside triphosphate hydrolases"/>
    <property type="match status" value="1"/>
</dbReference>
<dbReference type="PROSITE" id="PS51273">
    <property type="entry name" value="GATASE_TYPE_1"/>
    <property type="match status" value="1"/>
</dbReference>
<comment type="function">
    <text evidence="1">Catalyzes the ATP-dependent amination of UTP to CTP with either L-glutamine or ammonia as the source of nitrogen. Regulates intracellular CTP levels through interactions with the four ribonucleotide triphosphates.</text>
</comment>
<comment type="catalytic activity">
    <reaction evidence="1">
        <text>UTP + L-glutamine + ATP + H2O = CTP + L-glutamate + ADP + phosphate + 2 H(+)</text>
        <dbReference type="Rhea" id="RHEA:26426"/>
        <dbReference type="ChEBI" id="CHEBI:15377"/>
        <dbReference type="ChEBI" id="CHEBI:15378"/>
        <dbReference type="ChEBI" id="CHEBI:29985"/>
        <dbReference type="ChEBI" id="CHEBI:30616"/>
        <dbReference type="ChEBI" id="CHEBI:37563"/>
        <dbReference type="ChEBI" id="CHEBI:43474"/>
        <dbReference type="ChEBI" id="CHEBI:46398"/>
        <dbReference type="ChEBI" id="CHEBI:58359"/>
        <dbReference type="ChEBI" id="CHEBI:456216"/>
        <dbReference type="EC" id="6.3.4.2"/>
    </reaction>
</comment>
<comment type="catalytic activity">
    <reaction evidence="1">
        <text>L-glutamine + H2O = L-glutamate + NH4(+)</text>
        <dbReference type="Rhea" id="RHEA:15889"/>
        <dbReference type="ChEBI" id="CHEBI:15377"/>
        <dbReference type="ChEBI" id="CHEBI:28938"/>
        <dbReference type="ChEBI" id="CHEBI:29985"/>
        <dbReference type="ChEBI" id="CHEBI:58359"/>
    </reaction>
</comment>
<comment type="catalytic activity">
    <reaction evidence="1">
        <text>UTP + NH4(+) + ATP = CTP + ADP + phosphate + 2 H(+)</text>
        <dbReference type="Rhea" id="RHEA:16597"/>
        <dbReference type="ChEBI" id="CHEBI:15378"/>
        <dbReference type="ChEBI" id="CHEBI:28938"/>
        <dbReference type="ChEBI" id="CHEBI:30616"/>
        <dbReference type="ChEBI" id="CHEBI:37563"/>
        <dbReference type="ChEBI" id="CHEBI:43474"/>
        <dbReference type="ChEBI" id="CHEBI:46398"/>
        <dbReference type="ChEBI" id="CHEBI:456216"/>
    </reaction>
</comment>
<comment type="activity regulation">
    <text evidence="1">Allosterically activated by GTP, when glutamine is the substrate; GTP has no effect on the reaction when ammonia is the substrate. The allosteric effector GTP functions by stabilizing the protein conformation that binds the tetrahedral intermediate(s) formed during glutamine hydrolysis. Inhibited by the product CTP, via allosteric rather than competitive inhibition.</text>
</comment>
<comment type="pathway">
    <text evidence="1">Pyrimidine metabolism; CTP biosynthesis via de novo pathway; CTP from UDP: step 2/2.</text>
</comment>
<comment type="subunit">
    <text evidence="1">Homotetramer.</text>
</comment>
<comment type="miscellaneous">
    <text evidence="1">CTPSs have evolved a hybrid strategy for distinguishing between UTP and CTP. The overlapping regions of the product feedback inhibitory and substrate sites recognize a common feature in both compounds, the triphosphate moiety. To differentiate isosteric substrate and product pyrimidine rings, an additional pocket far from the expected kinase/ligase catalytic site, specifically recognizes the cytosine and ribose portions of the product inhibitor.</text>
</comment>
<comment type="similarity">
    <text evidence="1">Belongs to the CTP synthase family.</text>
</comment>
<comment type="sequence caution" evidence="2">
    <conflict type="erroneous initiation">
        <sequence resource="EMBL-CDS" id="CAE78757"/>
    </conflict>
</comment>
<sequence length="534" mass="59098">MKQKFIFVTGGVVSSIGKGLTAASLGALLEGRGHKVTIMKFDPYLNVDPGTMSPLQHGEVYVTEDGAETDLDLGHYERFTSALMNRSNSVSTGQIYDTVLNRERRGDYLGGTVQVIPHITEEIKARIYEAAQGSEIILVEIGGTVGDIESQPFLEAIRQMRIDVGQENSVLVHVTYVPYIAAAGELKSKPTQHSVKELREIGLQPDFLVCRSEKVIDDNLKAKIGLFCSVKPENVIAAQDSRFIYEVPLALHREKLDELIVARLGLSAGKLNMKGWQNLVKILGNPSHTVKIGVVGKYVDLKESYKSLHEALVHGGVANNARVEIIYVDSEKVTDKTVHSLLGKVDGILVPGGFGTRGVEGKITAIKYAREKRVPFFGICFGMQLSAIEFARNVCGIKDATSREFHAENKRTGNFVIDSMAEQRGVINKGGTMRLGAFPCAIASGSRAYQVYKASSIMERHRHRFEFNNKYKDLFEKNGMMASGICKERDLVEIVELPDHPWFVGVQFHPEFKSKPLAPHPLFVHFVKASLKKK</sequence>
<organism>
    <name type="scientific">Bdellovibrio bacteriovorus (strain ATCC 15356 / DSM 50701 / NCIMB 9529 / HD100)</name>
    <dbReference type="NCBI Taxonomy" id="264462"/>
    <lineage>
        <taxon>Bacteria</taxon>
        <taxon>Pseudomonadati</taxon>
        <taxon>Bdellovibrionota</taxon>
        <taxon>Bdellovibrionia</taxon>
        <taxon>Bdellovibrionales</taxon>
        <taxon>Pseudobdellovibrionaceae</taxon>
        <taxon>Bdellovibrio</taxon>
    </lineage>
</organism>
<feature type="chain" id="PRO_0000266068" description="CTP synthase">
    <location>
        <begin position="1"/>
        <end position="534"/>
    </location>
</feature>
<feature type="domain" description="Glutamine amidotransferase type-1" evidence="1">
    <location>
        <begin position="291"/>
        <end position="534"/>
    </location>
</feature>
<feature type="region of interest" description="Amidoligase domain" evidence="1">
    <location>
        <begin position="1"/>
        <end position="266"/>
    </location>
</feature>
<feature type="active site" description="Nucleophile; for glutamine hydrolysis" evidence="1">
    <location>
        <position position="380"/>
    </location>
</feature>
<feature type="active site" evidence="1">
    <location>
        <position position="509"/>
    </location>
</feature>
<feature type="active site" evidence="1">
    <location>
        <position position="511"/>
    </location>
</feature>
<feature type="binding site" evidence="1">
    <location>
        <position position="14"/>
    </location>
    <ligand>
        <name>CTP</name>
        <dbReference type="ChEBI" id="CHEBI:37563"/>
        <note>allosteric inhibitor</note>
    </ligand>
</feature>
<feature type="binding site" evidence="1">
    <location>
        <position position="14"/>
    </location>
    <ligand>
        <name>UTP</name>
        <dbReference type="ChEBI" id="CHEBI:46398"/>
    </ligand>
</feature>
<feature type="binding site" evidence="1">
    <location>
        <begin position="15"/>
        <end position="20"/>
    </location>
    <ligand>
        <name>ATP</name>
        <dbReference type="ChEBI" id="CHEBI:30616"/>
    </ligand>
</feature>
<feature type="binding site" evidence="1">
    <location>
        <position position="72"/>
    </location>
    <ligand>
        <name>ATP</name>
        <dbReference type="ChEBI" id="CHEBI:30616"/>
    </ligand>
</feature>
<feature type="binding site" evidence="1">
    <location>
        <position position="72"/>
    </location>
    <ligand>
        <name>Mg(2+)</name>
        <dbReference type="ChEBI" id="CHEBI:18420"/>
    </ligand>
</feature>
<feature type="binding site" evidence="1">
    <location>
        <position position="140"/>
    </location>
    <ligand>
        <name>Mg(2+)</name>
        <dbReference type="ChEBI" id="CHEBI:18420"/>
    </ligand>
</feature>
<feature type="binding site" evidence="1">
    <location>
        <begin position="147"/>
        <end position="149"/>
    </location>
    <ligand>
        <name>CTP</name>
        <dbReference type="ChEBI" id="CHEBI:37563"/>
        <note>allosteric inhibitor</note>
    </ligand>
</feature>
<feature type="binding site" evidence="1">
    <location>
        <begin position="187"/>
        <end position="192"/>
    </location>
    <ligand>
        <name>CTP</name>
        <dbReference type="ChEBI" id="CHEBI:37563"/>
        <note>allosteric inhibitor</note>
    </ligand>
</feature>
<feature type="binding site" evidence="1">
    <location>
        <begin position="187"/>
        <end position="192"/>
    </location>
    <ligand>
        <name>UTP</name>
        <dbReference type="ChEBI" id="CHEBI:46398"/>
    </ligand>
</feature>
<feature type="binding site" evidence="1">
    <location>
        <position position="223"/>
    </location>
    <ligand>
        <name>CTP</name>
        <dbReference type="ChEBI" id="CHEBI:37563"/>
        <note>allosteric inhibitor</note>
    </ligand>
</feature>
<feature type="binding site" evidence="1">
    <location>
        <position position="223"/>
    </location>
    <ligand>
        <name>UTP</name>
        <dbReference type="ChEBI" id="CHEBI:46398"/>
    </ligand>
</feature>
<feature type="binding site" evidence="1">
    <location>
        <position position="353"/>
    </location>
    <ligand>
        <name>L-glutamine</name>
        <dbReference type="ChEBI" id="CHEBI:58359"/>
    </ligand>
</feature>
<feature type="binding site" evidence="1">
    <location>
        <begin position="381"/>
        <end position="384"/>
    </location>
    <ligand>
        <name>L-glutamine</name>
        <dbReference type="ChEBI" id="CHEBI:58359"/>
    </ligand>
</feature>
<feature type="binding site" evidence="1">
    <location>
        <position position="404"/>
    </location>
    <ligand>
        <name>L-glutamine</name>
        <dbReference type="ChEBI" id="CHEBI:58359"/>
    </ligand>
</feature>
<feature type="binding site" evidence="1">
    <location>
        <position position="464"/>
    </location>
    <ligand>
        <name>L-glutamine</name>
        <dbReference type="ChEBI" id="CHEBI:58359"/>
    </ligand>
</feature>
<accession>Q6MPP0</accession>
<reference key="1">
    <citation type="journal article" date="2004" name="Science">
        <title>A predator unmasked: life cycle of Bdellovibrio bacteriovorus from a genomic perspective.</title>
        <authorList>
            <person name="Rendulic S."/>
            <person name="Jagtap P."/>
            <person name="Rosinus A."/>
            <person name="Eppinger M."/>
            <person name="Baar C."/>
            <person name="Lanz C."/>
            <person name="Keller H."/>
            <person name="Lambert C."/>
            <person name="Evans K.J."/>
            <person name="Goesmann A."/>
            <person name="Meyer F."/>
            <person name="Sockett R.E."/>
            <person name="Schuster S.C."/>
        </authorList>
    </citation>
    <scope>NUCLEOTIDE SEQUENCE [LARGE SCALE GENOMIC DNA]</scope>
    <source>
        <strain>ATCC 15356 / DSM 50701 / NCIMB 9529 / HD100</strain>
    </source>
</reference>
<evidence type="ECO:0000255" key="1">
    <source>
        <dbReference type="HAMAP-Rule" id="MF_01227"/>
    </source>
</evidence>
<evidence type="ECO:0000305" key="2"/>
<name>PYRG_BDEBA</name>
<protein>
    <recommendedName>
        <fullName evidence="1">CTP synthase</fullName>
        <ecNumber evidence="1">6.3.4.2</ecNumber>
    </recommendedName>
    <alternativeName>
        <fullName evidence="1">Cytidine 5'-triphosphate synthase</fullName>
    </alternativeName>
    <alternativeName>
        <fullName evidence="1">Cytidine triphosphate synthetase</fullName>
        <shortName evidence="1">CTP synthetase</shortName>
        <shortName evidence="1">CTPS</shortName>
    </alternativeName>
    <alternativeName>
        <fullName evidence="1">UTP--ammonia ligase</fullName>
    </alternativeName>
</protein>